<name>YPD1_CAEEL</name>
<gene>
    <name type="ORF">C05D11.1</name>
</gene>
<organism>
    <name type="scientific">Caenorhabditis elegans</name>
    <dbReference type="NCBI Taxonomy" id="6239"/>
    <lineage>
        <taxon>Eukaryota</taxon>
        <taxon>Metazoa</taxon>
        <taxon>Ecdysozoa</taxon>
        <taxon>Nematoda</taxon>
        <taxon>Chromadorea</taxon>
        <taxon>Rhabditida</taxon>
        <taxon>Rhabditina</taxon>
        <taxon>Rhabditomorpha</taxon>
        <taxon>Rhabditoidea</taxon>
        <taxon>Rhabditidae</taxon>
        <taxon>Peloderinae</taxon>
        <taxon>Caenorhabditis</taxon>
    </lineage>
</organism>
<proteinExistence type="predicted"/>
<protein>
    <recommendedName>
        <fullName>Uncharacterized protein C05D11.1</fullName>
    </recommendedName>
</protein>
<keyword id="KW-1185">Reference proteome</keyword>
<feature type="chain" id="PRO_0000178011" description="Uncharacterized protein C05D11.1">
    <location>
        <begin position="1"/>
        <end position="995"/>
    </location>
</feature>
<accession>P48053</accession>
<reference key="1">
    <citation type="journal article" date="1998" name="Science">
        <title>Genome sequence of the nematode C. elegans: a platform for investigating biology.</title>
        <authorList>
            <consortium name="The C. elegans sequencing consortium"/>
        </authorList>
    </citation>
    <scope>NUCLEOTIDE SEQUENCE [LARGE SCALE GENOMIC DNA]</scope>
    <source>
        <strain>Bristol N2</strain>
    </source>
</reference>
<sequence length="995" mass="111249">MSASKLWSCTETVLNGGIKLFLYSSKNTKLRVAIGEVPGPMVHGAVSFVTEADSDDGLPHTLEHLVFMGSKKYPFKGVLDVIANRCLADGTNAWTDTDHTAYTLSTVGSDGFLKVLPVYINHLLTPMLTASQFATEVHHITGEGNDAGVVYSEMQDHESEMESIMDRKTKEVIYPPFNPYAVDTGGRLKNLRESCTLEKVRDYHKKFYHLSNMVVTVCGMVDHDQVLEIMNNVENEHMSTVPDHFPKPFSFALSDIKESTVHRVECPTDDASRGAVEVAWFAHSPSDLETHSSLHVLFDYLSNTSVAPLQKDFILLEDPLASSVSFHIAEGVRCDLRLNFAGVPVEKLDECAPKFFDKTVREHLEEANFDMERMGYLIDQTILNELVKLETNAPKDIMSHIIGHQLFDNEDEELFKKRTNEIDFLKKLKSEPASYWVQLVNKYFTAPSATVIGVPNEELVDKIAEEEEKRIAAQCEKLGKKGLEEAGKSLEAAILENTANHPSAELLDQLIVKDLEAFDRFPVQSLTSNSPSLTPQQSTFLAQFPFHANLHNCPTKFVEIFFLLDSSNLSIEDRSYLFLYTDLLFESPAMIDGVLTSADDVAKHFTKDLIDHSIQVGVSGLYDRFVNLRIKVGADKYPLLAKWAQIFTQGVVFDPSRIHQCAQKLAGEARDRKRDGCTVASTAVASMVYGKNTNCILFDELVLEKLHEKISKDVMKNPEAVLEKLEQVRSALFSNGVNAHFVADVDSIDPKMLSSDLWTWVQADPRFGPGHQFSAEAGENVSLELGKELLIGVGGSESSFIYQTSFLDANWNSEELIPAMIFGQYLSQCEGPLWRAIRGDGLAYGANVFVKPDRKQITLSLYRCAQPAVAYERTRDIIRKIVESGEISKAEFEGAKRSTVFEMMKREGTVSGAAKISILNNFRQTPHPFNIDLCRRIWNLTSEEMVKIGGPPLARLFDEKCFVRSIAVHPSKLNEMKKAFPGSSKIKISDLQFAC</sequence>
<dbReference type="EMBL" id="FO080365">
    <property type="protein sequence ID" value="CCD63190.1"/>
    <property type="molecule type" value="Genomic_DNA"/>
</dbReference>
<dbReference type="PIR" id="A88483">
    <property type="entry name" value="A88483"/>
</dbReference>
<dbReference type="RefSeq" id="NP_001021145.1">
    <property type="nucleotide sequence ID" value="NM_001025974.9"/>
</dbReference>
<dbReference type="SMR" id="P48053"/>
<dbReference type="BioGRID" id="41132">
    <property type="interactions" value="5"/>
</dbReference>
<dbReference type="FunCoup" id="P48053">
    <property type="interactions" value="1102"/>
</dbReference>
<dbReference type="STRING" id="6239.C05D11.1.1"/>
<dbReference type="MEROPS" id="M16.A12"/>
<dbReference type="PaxDb" id="6239-C05D11.1"/>
<dbReference type="PeptideAtlas" id="P48053"/>
<dbReference type="EnsemblMetazoa" id="C05D11.1.1">
    <property type="protein sequence ID" value="C05D11.1.1"/>
    <property type="gene ID" value="WBGene00015481"/>
</dbReference>
<dbReference type="GeneID" id="175914"/>
<dbReference type="KEGG" id="cel:CELE_C05D11.1"/>
<dbReference type="UCSC" id="C05D11.1">
    <property type="organism name" value="c. elegans"/>
</dbReference>
<dbReference type="AGR" id="WB:WBGene00015481"/>
<dbReference type="CTD" id="175914"/>
<dbReference type="WormBase" id="C05D11.1">
    <property type="protein sequence ID" value="CE03926"/>
    <property type="gene ID" value="WBGene00015481"/>
</dbReference>
<dbReference type="eggNOG" id="KOG0961">
    <property type="taxonomic scope" value="Eukaryota"/>
</dbReference>
<dbReference type="GeneTree" id="ENSGT00550000075503"/>
<dbReference type="HOGENOM" id="CLU_006065_0_0_1"/>
<dbReference type="InParanoid" id="P48053"/>
<dbReference type="OMA" id="WEGFARI"/>
<dbReference type="OrthoDB" id="5809639at2759"/>
<dbReference type="PhylomeDB" id="P48053"/>
<dbReference type="PRO" id="PR:P48053"/>
<dbReference type="Proteomes" id="UP000001940">
    <property type="component" value="Chromosome III"/>
</dbReference>
<dbReference type="Bgee" id="WBGene00015481">
    <property type="expression patterns" value="Expressed in germ line (C elegans) and 4 other cell types or tissues"/>
</dbReference>
<dbReference type="GO" id="GO:0046872">
    <property type="term" value="F:metal ion binding"/>
    <property type="evidence" value="ECO:0007669"/>
    <property type="project" value="InterPro"/>
</dbReference>
<dbReference type="FunFam" id="3.30.830.10:FF:000015">
    <property type="entry name" value="Putative zinc metalloprotease"/>
    <property type="match status" value="1"/>
</dbReference>
<dbReference type="FunFam" id="3.30.830.10:FF:000031">
    <property type="entry name" value="Putative zinc metalloprotease"/>
    <property type="match status" value="1"/>
</dbReference>
<dbReference type="FunFam" id="3.30.830.10:FF:000125">
    <property type="entry name" value="Uncharacterized protein C05D11.1"/>
    <property type="match status" value="1"/>
</dbReference>
<dbReference type="Gene3D" id="3.30.830.10">
    <property type="entry name" value="Metalloenzyme, LuxS/M16 peptidase-like"/>
    <property type="match status" value="4"/>
</dbReference>
<dbReference type="InterPro" id="IPR011249">
    <property type="entry name" value="Metalloenz_LuxS/M16"/>
</dbReference>
<dbReference type="InterPro" id="IPR011765">
    <property type="entry name" value="Pept_M16_N"/>
</dbReference>
<dbReference type="InterPro" id="IPR007863">
    <property type="entry name" value="Peptidase_M16_C"/>
</dbReference>
<dbReference type="PANTHER" id="PTHR43016:SF16">
    <property type="entry name" value="METALLOPROTEASE, PUTATIVE (AFU_ORTHOLOGUE AFUA_4G07610)-RELATED"/>
    <property type="match status" value="1"/>
</dbReference>
<dbReference type="PANTHER" id="PTHR43016">
    <property type="entry name" value="PRESEQUENCE PROTEASE"/>
    <property type="match status" value="1"/>
</dbReference>
<dbReference type="Pfam" id="PF00675">
    <property type="entry name" value="Peptidase_M16"/>
    <property type="match status" value="1"/>
</dbReference>
<dbReference type="Pfam" id="PF05193">
    <property type="entry name" value="Peptidase_M16_C"/>
    <property type="match status" value="2"/>
</dbReference>
<dbReference type="SUPFAM" id="SSF63411">
    <property type="entry name" value="LuxS/MPP-like metallohydrolase"/>
    <property type="match status" value="3"/>
</dbReference>